<comment type="function">
    <text evidence="1">Involved in cell wall synthesis where it is required for glycosylation. Involved in cell cycle progression through cell-size checkpoint (By similarity).</text>
</comment>
<comment type="catalytic activity">
    <reaction evidence="2">
        <text>alpha-D-mannose 1-phosphate + GTP + H(+) = GDP-alpha-D-mannose + diphosphate</text>
        <dbReference type="Rhea" id="RHEA:15229"/>
        <dbReference type="ChEBI" id="CHEBI:15378"/>
        <dbReference type="ChEBI" id="CHEBI:33019"/>
        <dbReference type="ChEBI" id="CHEBI:37565"/>
        <dbReference type="ChEBI" id="CHEBI:57527"/>
        <dbReference type="ChEBI" id="CHEBI:58409"/>
        <dbReference type="EC" id="2.7.7.13"/>
    </reaction>
</comment>
<comment type="pathway">
    <text>Nucleotide-sugar biosynthesis; GDP-alpha-D-mannose biosynthesis; GDP-alpha-D-mannose from alpha-D-mannose 1-phosphate (GTP route): step 1/1.</text>
</comment>
<comment type="subcellular location">
    <subcellularLocation>
        <location evidence="1">Cytoplasm</location>
    </subcellularLocation>
</comment>
<comment type="similarity">
    <text evidence="3">Belongs to the transferase hexapeptide repeat family.</text>
</comment>
<gene>
    <name type="primary">MPG1</name>
    <name type="synonym">PSA1</name>
    <name type="ordered locus">KLLA0E05379g</name>
</gene>
<sequence length="361" mass="39320">MKGLILVGGYGTRLRPLTLTVPKPLVEFGNRPMILHQIEALAAAGVTDIVLAVNYRPEVMVETLKKYEDEFGVSITFSVETEPLGTAGPLKLAESVLKKDNSPFFVLNSDVICDYPFKELADFHQAHGGKGTIVATKVDEPSKYGVIVHDIATPNLIDRFVEKPVEFVGNRINAGLYILNPEVIDLIDLKPTSIEKETFPILVEQKSLYSFDLEGYWMDVGQPKDFLSGTVLYLNSLSKRDPAKLAKGENIVGNVLVDPTAKISPTAKVGPDVVIGPNVVIGDGVRITRSVALSNSHIKDHALVKSTIIGWNSTVGKWARLEGVTVLGDDVEVKDEIYINGGKVLPHKSISVNVPKEAIIM</sequence>
<name>MPG1_KLULA</name>
<evidence type="ECO:0000250" key="1"/>
<evidence type="ECO:0000269" key="2">
    <source>
    </source>
</evidence>
<evidence type="ECO:0000305" key="3"/>
<feature type="chain" id="PRO_0000238490" description="Mannose-1-phosphate guanyltransferase">
    <location>
        <begin position="1"/>
        <end position="361"/>
    </location>
</feature>
<accession>Q70SJ2</accession>
<accession>Q6CPE9</accession>
<reference key="1">
    <citation type="journal article" date="2005" name="FEMS Yeast Res.">
        <title>Enhanced secretion of heterologous proteins in Kluyveromyces lactis by overexpression of the GDP-mannose pyrophosphorylase, KlPsa1p.</title>
        <authorList>
            <person name="Uccelletti D."/>
            <person name="Staneva D."/>
            <person name="Rufini S."/>
            <person name="Venkov P."/>
            <person name="Palleschi C."/>
        </authorList>
    </citation>
    <scope>NUCLEOTIDE SEQUENCE [GENOMIC DNA]</scope>
    <scope>CATALYTIC ACTIVITY</scope>
</reference>
<reference key="2">
    <citation type="journal article" date="2004" name="Nature">
        <title>Genome evolution in yeasts.</title>
        <authorList>
            <person name="Dujon B."/>
            <person name="Sherman D."/>
            <person name="Fischer G."/>
            <person name="Durrens P."/>
            <person name="Casaregola S."/>
            <person name="Lafontaine I."/>
            <person name="de Montigny J."/>
            <person name="Marck C."/>
            <person name="Neuveglise C."/>
            <person name="Talla E."/>
            <person name="Goffard N."/>
            <person name="Frangeul L."/>
            <person name="Aigle M."/>
            <person name="Anthouard V."/>
            <person name="Babour A."/>
            <person name="Barbe V."/>
            <person name="Barnay S."/>
            <person name="Blanchin S."/>
            <person name="Beckerich J.-M."/>
            <person name="Beyne E."/>
            <person name="Bleykasten C."/>
            <person name="Boisrame A."/>
            <person name="Boyer J."/>
            <person name="Cattolico L."/>
            <person name="Confanioleri F."/>
            <person name="de Daruvar A."/>
            <person name="Despons L."/>
            <person name="Fabre E."/>
            <person name="Fairhead C."/>
            <person name="Ferry-Dumazet H."/>
            <person name="Groppi A."/>
            <person name="Hantraye F."/>
            <person name="Hennequin C."/>
            <person name="Jauniaux N."/>
            <person name="Joyet P."/>
            <person name="Kachouri R."/>
            <person name="Kerrest A."/>
            <person name="Koszul R."/>
            <person name="Lemaire M."/>
            <person name="Lesur I."/>
            <person name="Ma L."/>
            <person name="Muller H."/>
            <person name="Nicaud J.-M."/>
            <person name="Nikolski M."/>
            <person name="Oztas S."/>
            <person name="Ozier-Kalogeropoulos O."/>
            <person name="Pellenz S."/>
            <person name="Potier S."/>
            <person name="Richard G.-F."/>
            <person name="Straub M.-L."/>
            <person name="Suleau A."/>
            <person name="Swennen D."/>
            <person name="Tekaia F."/>
            <person name="Wesolowski-Louvel M."/>
            <person name="Westhof E."/>
            <person name="Wirth B."/>
            <person name="Zeniou-Meyer M."/>
            <person name="Zivanovic Y."/>
            <person name="Bolotin-Fukuhara M."/>
            <person name="Thierry A."/>
            <person name="Bouchier C."/>
            <person name="Caudron B."/>
            <person name="Scarpelli C."/>
            <person name="Gaillardin C."/>
            <person name="Weissenbach J."/>
            <person name="Wincker P."/>
            <person name="Souciet J.-L."/>
        </authorList>
    </citation>
    <scope>NUCLEOTIDE SEQUENCE [LARGE SCALE GENOMIC DNA]</scope>
    <source>
        <strain>ATCC 8585 / CBS 2359 / DSM 70799 / NBRC 1267 / NRRL Y-1140 / WM37</strain>
    </source>
</reference>
<dbReference type="EC" id="2.7.7.13"/>
<dbReference type="EMBL" id="AJ551274">
    <property type="protein sequence ID" value="CAD82901.1"/>
    <property type="molecule type" value="Genomic_DNA"/>
</dbReference>
<dbReference type="EMBL" id="CR382125">
    <property type="protein sequence ID" value="CAG99277.1"/>
    <property type="molecule type" value="Genomic_DNA"/>
</dbReference>
<dbReference type="RefSeq" id="XP_454190.1">
    <property type="nucleotide sequence ID" value="XM_454190.1"/>
</dbReference>
<dbReference type="SMR" id="Q70SJ2"/>
<dbReference type="FunCoup" id="Q70SJ2">
    <property type="interactions" value="1573"/>
</dbReference>
<dbReference type="STRING" id="284590.Q70SJ2"/>
<dbReference type="PaxDb" id="284590-Q70SJ2"/>
<dbReference type="KEGG" id="kla:KLLA0_E05435g"/>
<dbReference type="eggNOG" id="KOG1322">
    <property type="taxonomic scope" value="Eukaryota"/>
</dbReference>
<dbReference type="HOGENOM" id="CLU_029499_0_0_1"/>
<dbReference type="InParanoid" id="Q70SJ2"/>
<dbReference type="OMA" id="GPNCWIC"/>
<dbReference type="UniPathway" id="UPA00126">
    <property type="reaction ID" value="UER00930"/>
</dbReference>
<dbReference type="Proteomes" id="UP000000598">
    <property type="component" value="Chromosome E"/>
</dbReference>
<dbReference type="GO" id="GO:0005737">
    <property type="term" value="C:cytoplasm"/>
    <property type="evidence" value="ECO:0007669"/>
    <property type="project" value="UniProtKB-SubCell"/>
</dbReference>
<dbReference type="GO" id="GO:0005525">
    <property type="term" value="F:GTP binding"/>
    <property type="evidence" value="ECO:0007669"/>
    <property type="project" value="UniProtKB-KW"/>
</dbReference>
<dbReference type="GO" id="GO:0004475">
    <property type="term" value="F:mannose-1-phosphate guanylyltransferase (GTP) activity"/>
    <property type="evidence" value="ECO:0007669"/>
    <property type="project" value="UniProtKB-EC"/>
</dbReference>
<dbReference type="GO" id="GO:0009298">
    <property type="term" value="P:GDP-mannose biosynthetic process"/>
    <property type="evidence" value="ECO:0007669"/>
    <property type="project" value="UniProtKB-UniPathway"/>
</dbReference>
<dbReference type="CDD" id="cd06425">
    <property type="entry name" value="M1P_guanylylT_B_like_N"/>
    <property type="match status" value="1"/>
</dbReference>
<dbReference type="FunFam" id="2.160.10.10:FF:000017">
    <property type="entry name" value="Mannose-1-phosphate guanyltransferase"/>
    <property type="match status" value="1"/>
</dbReference>
<dbReference type="FunFam" id="3.90.550.10:FF:000013">
    <property type="entry name" value="mannose-1-phosphate guanyltransferase beta"/>
    <property type="match status" value="1"/>
</dbReference>
<dbReference type="Gene3D" id="2.160.10.10">
    <property type="entry name" value="Hexapeptide repeat proteins"/>
    <property type="match status" value="1"/>
</dbReference>
<dbReference type="Gene3D" id="3.90.550.10">
    <property type="entry name" value="Spore Coat Polysaccharide Biosynthesis Protein SpsA, Chain A"/>
    <property type="match status" value="1"/>
</dbReference>
<dbReference type="InterPro" id="IPR056729">
    <property type="entry name" value="GMPPB_C"/>
</dbReference>
<dbReference type="InterPro" id="IPR045233">
    <property type="entry name" value="GMPPB_N"/>
</dbReference>
<dbReference type="InterPro" id="IPR018357">
    <property type="entry name" value="Hexapep_transf_CS"/>
</dbReference>
<dbReference type="InterPro" id="IPR050486">
    <property type="entry name" value="Mannose-1P_guanyltransferase"/>
</dbReference>
<dbReference type="InterPro" id="IPR005835">
    <property type="entry name" value="NTP_transferase_dom"/>
</dbReference>
<dbReference type="InterPro" id="IPR029044">
    <property type="entry name" value="Nucleotide-diphossugar_trans"/>
</dbReference>
<dbReference type="PANTHER" id="PTHR22572">
    <property type="entry name" value="SUGAR-1-PHOSPHATE GUANYL TRANSFERASE"/>
    <property type="match status" value="1"/>
</dbReference>
<dbReference type="Pfam" id="PF25087">
    <property type="entry name" value="GMPPB_C"/>
    <property type="match status" value="1"/>
</dbReference>
<dbReference type="Pfam" id="PF00483">
    <property type="entry name" value="NTP_transferase"/>
    <property type="match status" value="1"/>
</dbReference>
<dbReference type="SUPFAM" id="SSF53448">
    <property type="entry name" value="Nucleotide-diphospho-sugar transferases"/>
    <property type="match status" value="1"/>
</dbReference>
<dbReference type="PROSITE" id="PS00101">
    <property type="entry name" value="HEXAPEP_TRANSFERASES"/>
    <property type="match status" value="2"/>
</dbReference>
<proteinExistence type="evidence at protein level"/>
<keyword id="KW-0131">Cell cycle</keyword>
<keyword id="KW-0963">Cytoplasm</keyword>
<keyword id="KW-0342">GTP-binding</keyword>
<keyword id="KW-0547">Nucleotide-binding</keyword>
<keyword id="KW-0548">Nucleotidyltransferase</keyword>
<keyword id="KW-1185">Reference proteome</keyword>
<keyword id="KW-0808">Transferase</keyword>
<organism>
    <name type="scientific">Kluyveromyces lactis (strain ATCC 8585 / CBS 2359 / DSM 70799 / NBRC 1267 / NRRL Y-1140 / WM37)</name>
    <name type="common">Yeast</name>
    <name type="synonym">Candida sphaerica</name>
    <dbReference type="NCBI Taxonomy" id="284590"/>
    <lineage>
        <taxon>Eukaryota</taxon>
        <taxon>Fungi</taxon>
        <taxon>Dikarya</taxon>
        <taxon>Ascomycota</taxon>
        <taxon>Saccharomycotina</taxon>
        <taxon>Saccharomycetes</taxon>
        <taxon>Saccharomycetales</taxon>
        <taxon>Saccharomycetaceae</taxon>
        <taxon>Kluyveromyces</taxon>
    </lineage>
</organism>
<protein>
    <recommendedName>
        <fullName>Mannose-1-phosphate guanyltransferase</fullName>
        <ecNumber>2.7.7.13</ecNumber>
    </recommendedName>
    <alternativeName>
        <fullName>GDP-mannose pyrophosphorylase</fullName>
    </alternativeName>
    <alternativeName>
        <fullName>GTP-mannose-1-phosphate guanylyltransferase</fullName>
    </alternativeName>
</protein>